<reference key="1">
    <citation type="journal article" date="2001" name="Proc. Natl. Acad. Sci. U.S.A.">
        <title>Analysis of the chromosome sequence of the legume symbiont Sinorhizobium meliloti strain 1021.</title>
        <authorList>
            <person name="Capela D."/>
            <person name="Barloy-Hubler F."/>
            <person name="Gouzy J."/>
            <person name="Bothe G."/>
            <person name="Ampe F."/>
            <person name="Batut J."/>
            <person name="Boistard P."/>
            <person name="Becker A."/>
            <person name="Boutry M."/>
            <person name="Cadieu E."/>
            <person name="Dreano S."/>
            <person name="Gloux S."/>
            <person name="Godrie T."/>
            <person name="Goffeau A."/>
            <person name="Kahn D."/>
            <person name="Kiss E."/>
            <person name="Lelaure V."/>
            <person name="Masuy D."/>
            <person name="Pohl T."/>
            <person name="Portetelle D."/>
            <person name="Puehler A."/>
            <person name="Purnelle B."/>
            <person name="Ramsperger U."/>
            <person name="Renard C."/>
            <person name="Thebault P."/>
            <person name="Vandenbol M."/>
            <person name="Weidner S."/>
            <person name="Galibert F."/>
        </authorList>
    </citation>
    <scope>NUCLEOTIDE SEQUENCE [LARGE SCALE GENOMIC DNA]</scope>
    <source>
        <strain>1021</strain>
    </source>
</reference>
<reference key="2">
    <citation type="journal article" date="2001" name="Science">
        <title>The composite genome of the legume symbiont Sinorhizobium meliloti.</title>
        <authorList>
            <person name="Galibert F."/>
            <person name="Finan T.M."/>
            <person name="Long S.R."/>
            <person name="Puehler A."/>
            <person name="Abola P."/>
            <person name="Ampe F."/>
            <person name="Barloy-Hubler F."/>
            <person name="Barnett M.J."/>
            <person name="Becker A."/>
            <person name="Boistard P."/>
            <person name="Bothe G."/>
            <person name="Boutry M."/>
            <person name="Bowser L."/>
            <person name="Buhrmester J."/>
            <person name="Cadieu E."/>
            <person name="Capela D."/>
            <person name="Chain P."/>
            <person name="Cowie A."/>
            <person name="Davis R.W."/>
            <person name="Dreano S."/>
            <person name="Federspiel N.A."/>
            <person name="Fisher R.F."/>
            <person name="Gloux S."/>
            <person name="Godrie T."/>
            <person name="Goffeau A."/>
            <person name="Golding B."/>
            <person name="Gouzy J."/>
            <person name="Gurjal M."/>
            <person name="Hernandez-Lucas I."/>
            <person name="Hong A."/>
            <person name="Huizar L."/>
            <person name="Hyman R.W."/>
            <person name="Jones T."/>
            <person name="Kahn D."/>
            <person name="Kahn M.L."/>
            <person name="Kalman S."/>
            <person name="Keating D.H."/>
            <person name="Kiss E."/>
            <person name="Komp C."/>
            <person name="Lelaure V."/>
            <person name="Masuy D."/>
            <person name="Palm C."/>
            <person name="Peck M.C."/>
            <person name="Pohl T.M."/>
            <person name="Portetelle D."/>
            <person name="Purnelle B."/>
            <person name="Ramsperger U."/>
            <person name="Surzycki R."/>
            <person name="Thebault P."/>
            <person name="Vandenbol M."/>
            <person name="Vorhoelter F.J."/>
            <person name="Weidner S."/>
            <person name="Wells D.H."/>
            <person name="Wong K."/>
            <person name="Yeh K.-C."/>
            <person name="Batut J."/>
        </authorList>
    </citation>
    <scope>NUCLEOTIDE SEQUENCE [LARGE SCALE GENOMIC DNA]</scope>
    <source>
        <strain>1021</strain>
    </source>
</reference>
<protein>
    <recommendedName>
        <fullName evidence="1">Nucleoid-associated protein R00231</fullName>
    </recommendedName>
</protein>
<sequence>MRDIMGMMGKVKEMQAKMEKMQAEIAALEIDGTSGGGLVTVRLDGKGHMKSLKVDPSLFKEDDVEILEDLIVAAHKDAKDKAEAVQAEKTRELTAGLPIPPGMKLPF</sequence>
<feature type="chain" id="PRO_0000170428" description="Nucleoid-associated protein R00231">
    <location>
        <begin position="1"/>
        <end position="107"/>
    </location>
</feature>
<gene>
    <name type="ordered locus">R00231</name>
    <name type="ORF">SMc02906</name>
</gene>
<name>Y231_RHIME</name>
<comment type="function">
    <text evidence="1">Binds to DNA and alters its conformation. May be involved in regulation of gene expression, nucleoid organization and DNA protection.</text>
</comment>
<comment type="subunit">
    <text evidence="1">Homodimer.</text>
</comment>
<comment type="subcellular location">
    <subcellularLocation>
        <location evidence="1">Cytoplasm</location>
        <location evidence="1">Nucleoid</location>
    </subcellularLocation>
</comment>
<comment type="similarity">
    <text evidence="1">Belongs to the YbaB/EbfC family.</text>
</comment>
<organism>
    <name type="scientific">Rhizobium meliloti (strain 1021)</name>
    <name type="common">Ensifer meliloti</name>
    <name type="synonym">Sinorhizobium meliloti</name>
    <dbReference type="NCBI Taxonomy" id="266834"/>
    <lineage>
        <taxon>Bacteria</taxon>
        <taxon>Pseudomonadati</taxon>
        <taxon>Pseudomonadota</taxon>
        <taxon>Alphaproteobacteria</taxon>
        <taxon>Hyphomicrobiales</taxon>
        <taxon>Rhizobiaceae</taxon>
        <taxon>Sinorhizobium/Ensifer group</taxon>
        <taxon>Sinorhizobium</taxon>
    </lineage>
</organism>
<dbReference type="EMBL" id="AL591688">
    <property type="protein sequence ID" value="CAC41668.1"/>
    <property type="molecule type" value="Genomic_DNA"/>
</dbReference>
<dbReference type="RefSeq" id="NP_384337.1">
    <property type="nucleotide sequence ID" value="NC_003047.1"/>
</dbReference>
<dbReference type="RefSeq" id="WP_003533413.1">
    <property type="nucleotide sequence ID" value="NC_003047.1"/>
</dbReference>
<dbReference type="SMR" id="Q92SX1"/>
<dbReference type="EnsemblBacteria" id="CAC41668">
    <property type="protein sequence ID" value="CAC41668"/>
    <property type="gene ID" value="SMc02906"/>
</dbReference>
<dbReference type="KEGG" id="sme:SMc02906"/>
<dbReference type="PATRIC" id="fig|266834.11.peg.1597"/>
<dbReference type="eggNOG" id="COG0718">
    <property type="taxonomic scope" value="Bacteria"/>
</dbReference>
<dbReference type="HOGENOM" id="CLU_140930_0_1_5"/>
<dbReference type="OrthoDB" id="9803080at2"/>
<dbReference type="Proteomes" id="UP000001976">
    <property type="component" value="Chromosome"/>
</dbReference>
<dbReference type="GO" id="GO:0043590">
    <property type="term" value="C:bacterial nucleoid"/>
    <property type="evidence" value="ECO:0007669"/>
    <property type="project" value="UniProtKB-UniRule"/>
</dbReference>
<dbReference type="GO" id="GO:0005829">
    <property type="term" value="C:cytosol"/>
    <property type="evidence" value="ECO:0007669"/>
    <property type="project" value="TreeGrafter"/>
</dbReference>
<dbReference type="GO" id="GO:0003677">
    <property type="term" value="F:DNA binding"/>
    <property type="evidence" value="ECO:0007669"/>
    <property type="project" value="UniProtKB-UniRule"/>
</dbReference>
<dbReference type="Gene3D" id="3.30.1310.10">
    <property type="entry name" value="Nucleoid-associated protein YbaB-like domain"/>
    <property type="match status" value="1"/>
</dbReference>
<dbReference type="HAMAP" id="MF_00274">
    <property type="entry name" value="DNA_YbaB_EbfC"/>
    <property type="match status" value="1"/>
</dbReference>
<dbReference type="InterPro" id="IPR036894">
    <property type="entry name" value="YbaB-like_sf"/>
</dbReference>
<dbReference type="InterPro" id="IPR004401">
    <property type="entry name" value="YbaB/EbfC"/>
</dbReference>
<dbReference type="NCBIfam" id="TIGR00103">
    <property type="entry name" value="DNA_YbaB_EbfC"/>
    <property type="match status" value="1"/>
</dbReference>
<dbReference type="PANTHER" id="PTHR33449">
    <property type="entry name" value="NUCLEOID-ASSOCIATED PROTEIN YBAB"/>
    <property type="match status" value="1"/>
</dbReference>
<dbReference type="PANTHER" id="PTHR33449:SF1">
    <property type="entry name" value="NUCLEOID-ASSOCIATED PROTEIN YBAB"/>
    <property type="match status" value="1"/>
</dbReference>
<dbReference type="Pfam" id="PF02575">
    <property type="entry name" value="YbaB_DNA_bd"/>
    <property type="match status" value="1"/>
</dbReference>
<dbReference type="PIRSF" id="PIRSF004555">
    <property type="entry name" value="UCP004555"/>
    <property type="match status" value="1"/>
</dbReference>
<dbReference type="SUPFAM" id="SSF82607">
    <property type="entry name" value="YbaB-like"/>
    <property type="match status" value="1"/>
</dbReference>
<proteinExistence type="inferred from homology"/>
<keyword id="KW-0963">Cytoplasm</keyword>
<keyword id="KW-0238">DNA-binding</keyword>
<keyword id="KW-1185">Reference proteome</keyword>
<accession>Q92SX1</accession>
<evidence type="ECO:0000255" key="1">
    <source>
        <dbReference type="HAMAP-Rule" id="MF_00274"/>
    </source>
</evidence>